<evidence type="ECO:0000255" key="1">
    <source>
        <dbReference type="HAMAP-Rule" id="MF_01255"/>
    </source>
</evidence>
<sequence>MIVRTLDECRDSERRVASETWESVRMLLKNDNMGFSFHITTIYQDTETHIHYKNHLESVYCMSGEGEIEVIGGETYPIKPGTLYILDKHDEHYLRAYKDKEMVMACVFNPPITGTEVHDENGVYPVLD</sequence>
<keyword id="KW-0456">Lyase</keyword>
<reference key="1">
    <citation type="submission" date="2008-08" db="EMBL/GenBank/DDBJ databases">
        <title>Complete sequence of Vibrio fischeri strain MJ11.</title>
        <authorList>
            <person name="Mandel M.J."/>
            <person name="Stabb E.V."/>
            <person name="Ruby E.G."/>
            <person name="Ferriera S."/>
            <person name="Johnson J."/>
            <person name="Kravitz S."/>
            <person name="Beeson K."/>
            <person name="Sutton G."/>
            <person name="Rogers Y.-H."/>
            <person name="Friedman R."/>
            <person name="Frazier M."/>
            <person name="Venter J.C."/>
        </authorList>
    </citation>
    <scope>NUCLEOTIDE SEQUENCE [LARGE SCALE GENOMIC DNA]</scope>
    <source>
        <strain>MJ11</strain>
    </source>
</reference>
<comment type="function">
    <text evidence="1">Catalyzes the circularization of gamma-N-acetyl-alpha,gamma-diaminobutyric acid (ADABA) to ectoine (1,4,5,6-tetrahydro-2-methyl-4-pyrimidine carboxylic acid), which is an excellent osmoprotectant.</text>
</comment>
<comment type="catalytic activity">
    <reaction evidence="1">
        <text>(2S)-4-acetamido-2-aminobutanoate = L-ectoine + H2O</text>
        <dbReference type="Rhea" id="RHEA:17281"/>
        <dbReference type="ChEBI" id="CHEBI:15377"/>
        <dbReference type="ChEBI" id="CHEBI:58515"/>
        <dbReference type="ChEBI" id="CHEBI:58929"/>
        <dbReference type="EC" id="4.2.1.108"/>
    </reaction>
</comment>
<comment type="pathway">
    <text evidence="1">Amine and polyamine biosynthesis; ectoine biosynthesis; L-ectoine from L-aspartate 4-semialdehyde: step 3/3.</text>
</comment>
<comment type="similarity">
    <text evidence="1">Belongs to the ectoine synthase family.</text>
</comment>
<name>ECTC_ALIFM</name>
<proteinExistence type="inferred from homology"/>
<organism>
    <name type="scientific">Aliivibrio fischeri (strain MJ11)</name>
    <name type="common">Vibrio fischeri</name>
    <dbReference type="NCBI Taxonomy" id="388396"/>
    <lineage>
        <taxon>Bacteria</taxon>
        <taxon>Pseudomonadati</taxon>
        <taxon>Pseudomonadota</taxon>
        <taxon>Gammaproteobacteria</taxon>
        <taxon>Vibrionales</taxon>
        <taxon>Vibrionaceae</taxon>
        <taxon>Aliivibrio</taxon>
    </lineage>
</organism>
<protein>
    <recommendedName>
        <fullName evidence="1">L-ectoine synthase</fullName>
        <ecNumber evidence="1">4.2.1.108</ecNumber>
    </recommendedName>
    <alternativeName>
        <fullName evidence="1">N-acetyldiaminobutyrate dehydratase</fullName>
    </alternativeName>
</protein>
<accession>B5EVR2</accession>
<dbReference type="EC" id="4.2.1.108" evidence="1"/>
<dbReference type="EMBL" id="CP001133">
    <property type="protein sequence ID" value="ACH63958.1"/>
    <property type="molecule type" value="Genomic_DNA"/>
</dbReference>
<dbReference type="RefSeq" id="WP_012535114.1">
    <property type="nucleotide sequence ID" value="NC_011186.1"/>
</dbReference>
<dbReference type="SMR" id="B5EVR2"/>
<dbReference type="KEGG" id="vfm:VFMJ11_A1235"/>
<dbReference type="HOGENOM" id="CLU_154525_0_0_6"/>
<dbReference type="UniPathway" id="UPA00067">
    <property type="reaction ID" value="UER00123"/>
</dbReference>
<dbReference type="Proteomes" id="UP000001857">
    <property type="component" value="Chromosome II"/>
</dbReference>
<dbReference type="GO" id="GO:0033990">
    <property type="term" value="F:ectoine synthase activity"/>
    <property type="evidence" value="ECO:0007669"/>
    <property type="project" value="UniProtKB-EC"/>
</dbReference>
<dbReference type="GO" id="GO:0019491">
    <property type="term" value="P:ectoine biosynthetic process"/>
    <property type="evidence" value="ECO:0007669"/>
    <property type="project" value="UniProtKB-UniRule"/>
</dbReference>
<dbReference type="CDD" id="cd06978">
    <property type="entry name" value="cupin_EctC"/>
    <property type="match status" value="1"/>
</dbReference>
<dbReference type="Gene3D" id="2.60.120.10">
    <property type="entry name" value="Jelly Rolls"/>
    <property type="match status" value="1"/>
</dbReference>
<dbReference type="HAMAP" id="MF_01255">
    <property type="entry name" value="Ectoine_synth"/>
    <property type="match status" value="1"/>
</dbReference>
<dbReference type="InterPro" id="IPR010462">
    <property type="entry name" value="Ectoine_synth"/>
</dbReference>
<dbReference type="InterPro" id="IPR014710">
    <property type="entry name" value="RmlC-like_jellyroll"/>
</dbReference>
<dbReference type="InterPro" id="IPR011051">
    <property type="entry name" value="RmlC_Cupin_sf"/>
</dbReference>
<dbReference type="NCBIfam" id="NF009806">
    <property type="entry name" value="PRK13290.1"/>
    <property type="match status" value="1"/>
</dbReference>
<dbReference type="PANTHER" id="PTHR39289">
    <property type="match status" value="1"/>
</dbReference>
<dbReference type="PANTHER" id="PTHR39289:SF1">
    <property type="entry name" value="L-ECTOINE SYNTHASE"/>
    <property type="match status" value="1"/>
</dbReference>
<dbReference type="Pfam" id="PF06339">
    <property type="entry name" value="Ectoine_synth"/>
    <property type="match status" value="1"/>
</dbReference>
<dbReference type="SUPFAM" id="SSF51182">
    <property type="entry name" value="RmlC-like cupins"/>
    <property type="match status" value="1"/>
</dbReference>
<feature type="chain" id="PRO_1000139973" description="L-ectoine synthase">
    <location>
        <begin position="1"/>
        <end position="128"/>
    </location>
</feature>
<gene>
    <name evidence="1" type="primary">ectC</name>
    <name type="ordered locus">VFMJ11_A1235</name>
</gene>